<name>ATG5_ASPCL</name>
<accession>A1CE93</accession>
<evidence type="ECO:0000250" key="1"/>
<evidence type="ECO:0000305" key="2"/>
<dbReference type="EMBL" id="DS027052">
    <property type="protein sequence ID" value="EAW11192.1"/>
    <property type="status" value="ALT_SEQ"/>
    <property type="molecule type" value="Genomic_DNA"/>
</dbReference>
<dbReference type="RefSeq" id="XP_001272618.1">
    <property type="nucleotide sequence ID" value="XM_001272617.1"/>
</dbReference>
<dbReference type="SMR" id="A1CE93"/>
<dbReference type="STRING" id="344612.A1CE93"/>
<dbReference type="GeneID" id="4704716"/>
<dbReference type="KEGG" id="act:ACLA_088830"/>
<dbReference type="eggNOG" id="KOG2976">
    <property type="taxonomic scope" value="Eukaryota"/>
</dbReference>
<dbReference type="OrthoDB" id="272162at2759"/>
<dbReference type="Proteomes" id="UP000006701">
    <property type="component" value="Unassembled WGS sequence"/>
</dbReference>
<dbReference type="GO" id="GO:0034274">
    <property type="term" value="C:Atg12-Atg5-Atg16 complex"/>
    <property type="evidence" value="ECO:0007669"/>
    <property type="project" value="TreeGrafter"/>
</dbReference>
<dbReference type="GO" id="GO:0005776">
    <property type="term" value="C:autophagosome"/>
    <property type="evidence" value="ECO:0007669"/>
    <property type="project" value="TreeGrafter"/>
</dbReference>
<dbReference type="GO" id="GO:0044233">
    <property type="term" value="C:mitochondria-associated endoplasmic reticulum membrane contact site"/>
    <property type="evidence" value="ECO:0007669"/>
    <property type="project" value="TreeGrafter"/>
</dbReference>
<dbReference type="GO" id="GO:0061908">
    <property type="term" value="C:phagophore"/>
    <property type="evidence" value="ECO:0007669"/>
    <property type="project" value="TreeGrafter"/>
</dbReference>
<dbReference type="GO" id="GO:0034045">
    <property type="term" value="C:phagophore assembly site membrane"/>
    <property type="evidence" value="ECO:0007669"/>
    <property type="project" value="UniProtKB-SubCell"/>
</dbReference>
<dbReference type="GO" id="GO:0019776">
    <property type="term" value="F:Atg8-family ligase activity"/>
    <property type="evidence" value="ECO:0007669"/>
    <property type="project" value="TreeGrafter"/>
</dbReference>
<dbReference type="GO" id="GO:0000422">
    <property type="term" value="P:autophagy of mitochondrion"/>
    <property type="evidence" value="ECO:0007669"/>
    <property type="project" value="TreeGrafter"/>
</dbReference>
<dbReference type="GO" id="GO:0006995">
    <property type="term" value="P:cellular response to nitrogen starvation"/>
    <property type="evidence" value="ECO:0007669"/>
    <property type="project" value="TreeGrafter"/>
</dbReference>
<dbReference type="GO" id="GO:0034727">
    <property type="term" value="P:piecemeal microautophagy of the nucleus"/>
    <property type="evidence" value="ECO:0007669"/>
    <property type="project" value="TreeGrafter"/>
</dbReference>
<dbReference type="GO" id="GO:0015031">
    <property type="term" value="P:protein transport"/>
    <property type="evidence" value="ECO:0007669"/>
    <property type="project" value="UniProtKB-KW"/>
</dbReference>
<dbReference type="FunFam" id="1.10.246.190:FF:000004">
    <property type="entry name" value="Autophagy protein 5"/>
    <property type="match status" value="1"/>
</dbReference>
<dbReference type="FunFam" id="3.10.20.620:FF:000004">
    <property type="entry name" value="Autophagy protein 5"/>
    <property type="match status" value="1"/>
</dbReference>
<dbReference type="FunFam" id="3.10.20.90:FF:000290">
    <property type="entry name" value="Autophagy protein 5"/>
    <property type="match status" value="1"/>
</dbReference>
<dbReference type="Gene3D" id="3.10.20.620">
    <property type="match status" value="1"/>
</dbReference>
<dbReference type="Gene3D" id="1.10.246.190">
    <property type="entry name" value="Autophagy protein Apg5, helix rich domain"/>
    <property type="match status" value="1"/>
</dbReference>
<dbReference type="Gene3D" id="3.10.20.90">
    <property type="entry name" value="Phosphatidylinositol 3-kinase Catalytic Subunit, Chain A, domain 1"/>
    <property type="match status" value="1"/>
</dbReference>
<dbReference type="InterPro" id="IPR007239">
    <property type="entry name" value="Atg5"/>
</dbReference>
<dbReference type="InterPro" id="IPR048940">
    <property type="entry name" value="ATG5_HBR"/>
</dbReference>
<dbReference type="InterPro" id="IPR042526">
    <property type="entry name" value="Atg5_HR"/>
</dbReference>
<dbReference type="InterPro" id="IPR048939">
    <property type="entry name" value="ATG5_UblA"/>
</dbReference>
<dbReference type="InterPro" id="IPR042527">
    <property type="entry name" value="Atg5_UblA_dom_sf"/>
</dbReference>
<dbReference type="InterPro" id="IPR048318">
    <property type="entry name" value="ATG5_UblB"/>
</dbReference>
<dbReference type="PANTHER" id="PTHR13040">
    <property type="entry name" value="AUTOPHAGY PROTEIN 5"/>
    <property type="match status" value="1"/>
</dbReference>
<dbReference type="PANTHER" id="PTHR13040:SF2">
    <property type="entry name" value="AUTOPHAGY PROTEIN 5"/>
    <property type="match status" value="1"/>
</dbReference>
<dbReference type="Pfam" id="PF20637">
    <property type="entry name" value="ATG5_HBR"/>
    <property type="match status" value="1"/>
</dbReference>
<dbReference type="Pfam" id="PF20638">
    <property type="entry name" value="ATG5_UblA"/>
    <property type="match status" value="1"/>
</dbReference>
<dbReference type="Pfam" id="PF04106">
    <property type="entry name" value="ATG5_UblB"/>
    <property type="match status" value="1"/>
</dbReference>
<organism>
    <name type="scientific">Aspergillus clavatus (strain ATCC 1007 / CBS 513.65 / DSM 816 / NCTC 3887 / NRRL 1 / QM 1276 / 107)</name>
    <dbReference type="NCBI Taxonomy" id="344612"/>
    <lineage>
        <taxon>Eukaryota</taxon>
        <taxon>Fungi</taxon>
        <taxon>Dikarya</taxon>
        <taxon>Ascomycota</taxon>
        <taxon>Pezizomycotina</taxon>
        <taxon>Eurotiomycetes</taxon>
        <taxon>Eurotiomycetidae</taxon>
        <taxon>Eurotiales</taxon>
        <taxon>Aspergillaceae</taxon>
        <taxon>Aspergillus</taxon>
        <taxon>Aspergillus subgen. Fumigati</taxon>
    </lineage>
</organism>
<sequence>MENQASLNSIQKTVWDGKLPLQITLASSESRTFDQTDPYLISCPRISYLPSLLPRLRSFFASSLIEPKSQPHEGWFSFEGVPLKWHLPIGLLYDLYAGADPASKGSRPDESEQIISSVGDTLPWRLTLHFSDWPDEELVRLDADGMVMHDAFINSVKEADFLRNGTAKGIMSLSKEDSSGLWEAVQDVDLPSFQRISNILLPAPNQPFRNVPIRFFLPLPPDSGSPSLKVVQSPLPPSIPASTANATQSTVLRGKPASQLQTIGSALHSLLPNLFPSRRTPVLAKPVLHGAAVPMSAPVEEVARSAAYGDGWVYIVVRMMG</sequence>
<protein>
    <recommendedName>
        <fullName>Autophagy protein 5</fullName>
    </recommendedName>
</protein>
<gene>
    <name type="primary">atg5</name>
    <name type="ORF">ACLA_088830</name>
</gene>
<comment type="function">
    <text evidence="1">Involved in cytoplasm to vacuole transport (Cvt) and autophagic vesicle formation. Autophagy is essential for maintenance of amino acid levels and protein synthesis under nitrogen starvation. Required for selective autophagic degradation of the nucleus (nucleophagy). Also required for mitophagy, which eliminates defective or superfluous mitochondria in order to fulfill cellular energy requirements and prevent excess ROS production. Conjugation with atg12, through a ubiquitin-like conjugating system involving atg7 as an E1-like activating enzyme and atg10 as an E2-like conjugating enzyme, is essential for its function. The atg12-atg5 conjugate acts as an E3-like enzyme which is required for lipidation of atg8 and atg8 association to the vesicle membranes (By similarity).</text>
</comment>
<comment type="subunit">
    <text evidence="1">Conjugated with atg12.</text>
</comment>
<comment type="subcellular location">
    <subcellularLocation>
        <location evidence="1">Preautophagosomal structure membrane</location>
        <topology evidence="1">Peripheral membrane protein</topology>
    </subcellularLocation>
</comment>
<comment type="PTM">
    <text evidence="1">Conjugated to atg12; which is essential for autophagy.</text>
</comment>
<comment type="similarity">
    <text evidence="2">Belongs to the ATG5 family.</text>
</comment>
<comment type="sequence caution" evidence="2">
    <conflict type="erroneous gene model prediction">
        <sequence resource="EMBL-CDS" id="EAW11192"/>
    </conflict>
</comment>
<reference key="1">
    <citation type="journal article" date="2008" name="PLoS Genet.">
        <title>Genomic islands in the pathogenic filamentous fungus Aspergillus fumigatus.</title>
        <authorList>
            <person name="Fedorova N.D."/>
            <person name="Khaldi N."/>
            <person name="Joardar V.S."/>
            <person name="Maiti R."/>
            <person name="Amedeo P."/>
            <person name="Anderson M.J."/>
            <person name="Crabtree J."/>
            <person name="Silva J.C."/>
            <person name="Badger J.H."/>
            <person name="Albarraq A."/>
            <person name="Angiuoli S."/>
            <person name="Bussey H."/>
            <person name="Bowyer P."/>
            <person name="Cotty P.J."/>
            <person name="Dyer P.S."/>
            <person name="Egan A."/>
            <person name="Galens K."/>
            <person name="Fraser-Liggett C.M."/>
            <person name="Haas B.J."/>
            <person name="Inman J.M."/>
            <person name="Kent R."/>
            <person name="Lemieux S."/>
            <person name="Malavazi I."/>
            <person name="Orvis J."/>
            <person name="Roemer T."/>
            <person name="Ronning C.M."/>
            <person name="Sundaram J.P."/>
            <person name="Sutton G."/>
            <person name="Turner G."/>
            <person name="Venter J.C."/>
            <person name="White O.R."/>
            <person name="Whitty B.R."/>
            <person name="Youngman P."/>
            <person name="Wolfe K.H."/>
            <person name="Goldman G.H."/>
            <person name="Wortman J.R."/>
            <person name="Jiang B."/>
            <person name="Denning D.W."/>
            <person name="Nierman W.C."/>
        </authorList>
    </citation>
    <scope>NUCLEOTIDE SEQUENCE [LARGE SCALE GENOMIC DNA]</scope>
    <source>
        <strain>ATCC 1007 / CBS 513.65 / DSM 816 / NCTC 3887 / NRRL 1 / QM 1276 / 107</strain>
    </source>
</reference>
<feature type="chain" id="PRO_0000317849" description="Autophagy protein 5">
    <location>
        <begin position="1"/>
        <end position="321"/>
    </location>
</feature>
<feature type="cross-link" description="Glycyl lysine isopeptide (Lys-Gly) (interchain with G-Cter in atg12)" evidence="1">
    <location>
        <position position="157"/>
    </location>
</feature>
<keyword id="KW-0072">Autophagy</keyword>
<keyword id="KW-1017">Isopeptide bond</keyword>
<keyword id="KW-0472">Membrane</keyword>
<keyword id="KW-0653">Protein transport</keyword>
<keyword id="KW-1185">Reference proteome</keyword>
<keyword id="KW-0813">Transport</keyword>
<keyword id="KW-0832">Ubl conjugation</keyword>
<proteinExistence type="inferred from homology"/>